<comment type="subcellular location">
    <subcellularLocation>
        <location evidence="2">Cell membrane</location>
        <topology evidence="2">Multi-pass membrane protein</topology>
    </subcellularLocation>
</comment>
<comment type="similarity">
    <text evidence="2">Belongs to the chloride channel (TC 2.A.49) family.</text>
</comment>
<feature type="chain" id="PRO_0000094499" description="Putative ion-transport protein YfeO">
    <location>
        <begin position="1"/>
        <end position="418"/>
    </location>
</feature>
<feature type="transmembrane region" description="Helical" evidence="1">
    <location>
        <begin position="15"/>
        <end position="37"/>
    </location>
</feature>
<feature type="transmembrane region" description="Helical" evidence="1">
    <location>
        <begin position="57"/>
        <end position="79"/>
    </location>
</feature>
<feature type="transmembrane region" description="Helical" evidence="1">
    <location>
        <begin position="99"/>
        <end position="118"/>
    </location>
</feature>
<feature type="transmembrane region" description="Helical" evidence="1">
    <location>
        <begin position="149"/>
        <end position="171"/>
    </location>
</feature>
<feature type="transmembrane region" description="Helical" evidence="1">
    <location>
        <begin position="186"/>
        <end position="208"/>
    </location>
</feature>
<feature type="transmembrane region" description="Helical" evidence="1">
    <location>
        <begin position="221"/>
        <end position="243"/>
    </location>
</feature>
<feature type="transmembrane region" description="Helical" evidence="1">
    <location>
        <begin position="258"/>
        <end position="280"/>
    </location>
</feature>
<feature type="transmembrane region" description="Helical" evidence="1">
    <location>
        <begin position="301"/>
        <end position="323"/>
    </location>
</feature>
<feature type="transmembrane region" description="Helical" evidence="1">
    <location>
        <begin position="343"/>
        <end position="363"/>
    </location>
</feature>
<feature type="transmembrane region" description="Helical" evidence="1">
    <location>
        <begin position="376"/>
        <end position="398"/>
    </location>
</feature>
<gene>
    <name type="primary">yfeO</name>
    <name type="ordered locus">SF2455</name>
    <name type="ordered locus">S2594</name>
</gene>
<keyword id="KW-1003">Cell membrane</keyword>
<keyword id="KW-0407">Ion channel</keyword>
<keyword id="KW-0406">Ion transport</keyword>
<keyword id="KW-0472">Membrane</keyword>
<keyword id="KW-1185">Reference proteome</keyword>
<keyword id="KW-0812">Transmembrane</keyword>
<keyword id="KW-1133">Transmembrane helix</keyword>
<keyword id="KW-0813">Transport</keyword>
<evidence type="ECO:0000255" key="1"/>
<evidence type="ECO:0000305" key="2"/>
<proteinExistence type="inferred from homology"/>
<dbReference type="EMBL" id="AE005674">
    <property type="protein sequence ID" value="AAN43963.1"/>
    <property type="molecule type" value="Genomic_DNA"/>
</dbReference>
<dbReference type="EMBL" id="AE014073">
    <property type="protein sequence ID" value="AAP17774.1"/>
    <property type="molecule type" value="Genomic_DNA"/>
</dbReference>
<dbReference type="RefSeq" id="NP_708256.1">
    <property type="nucleotide sequence ID" value="NC_004337.2"/>
</dbReference>
<dbReference type="RefSeq" id="WP_000903159.1">
    <property type="nucleotide sequence ID" value="NZ_WPGW01000027.1"/>
</dbReference>
<dbReference type="SMR" id="P59585"/>
<dbReference type="STRING" id="198214.SF2455"/>
<dbReference type="PaxDb" id="198214-SF2455"/>
<dbReference type="GeneID" id="1027214"/>
<dbReference type="KEGG" id="sfl:SF2455"/>
<dbReference type="KEGG" id="sfx:S2594"/>
<dbReference type="PATRIC" id="fig|198214.7.peg.2933"/>
<dbReference type="HOGENOM" id="CLU_053130_0_0_6"/>
<dbReference type="Proteomes" id="UP000001006">
    <property type="component" value="Chromosome"/>
</dbReference>
<dbReference type="Proteomes" id="UP000002673">
    <property type="component" value="Chromosome"/>
</dbReference>
<dbReference type="GO" id="GO:0005886">
    <property type="term" value="C:plasma membrane"/>
    <property type="evidence" value="ECO:0007669"/>
    <property type="project" value="UniProtKB-SubCell"/>
</dbReference>
<dbReference type="GO" id="GO:0015108">
    <property type="term" value="F:chloride transmembrane transporter activity"/>
    <property type="evidence" value="ECO:0007669"/>
    <property type="project" value="InterPro"/>
</dbReference>
<dbReference type="GO" id="GO:0005216">
    <property type="term" value="F:monoatomic ion channel activity"/>
    <property type="evidence" value="ECO:0007669"/>
    <property type="project" value="UniProtKB-UniRule"/>
</dbReference>
<dbReference type="CDD" id="cd00400">
    <property type="entry name" value="Voltage_gated_ClC"/>
    <property type="match status" value="1"/>
</dbReference>
<dbReference type="FunFam" id="1.10.3080.10:FF:000007">
    <property type="entry name" value="Putative ion-transport protein YfeO"/>
    <property type="match status" value="1"/>
</dbReference>
<dbReference type="Gene3D" id="1.10.3080.10">
    <property type="entry name" value="Clc chloride channel"/>
    <property type="match status" value="1"/>
</dbReference>
<dbReference type="HAMAP" id="MF_01115">
    <property type="entry name" value="CLC_YfeO"/>
    <property type="match status" value="1"/>
</dbReference>
<dbReference type="InterPro" id="IPR022969">
    <property type="entry name" value="Chloride_channel_YfeO"/>
</dbReference>
<dbReference type="InterPro" id="IPR014743">
    <property type="entry name" value="Cl-channel_core"/>
</dbReference>
<dbReference type="InterPro" id="IPR001807">
    <property type="entry name" value="ClC"/>
</dbReference>
<dbReference type="InterPro" id="IPR050368">
    <property type="entry name" value="ClC-type_chloride_channel"/>
</dbReference>
<dbReference type="NCBIfam" id="NF002971">
    <property type="entry name" value="PRK03655.1"/>
    <property type="match status" value="1"/>
</dbReference>
<dbReference type="PANTHER" id="PTHR43427">
    <property type="entry name" value="CHLORIDE CHANNEL PROTEIN CLC-E"/>
    <property type="match status" value="1"/>
</dbReference>
<dbReference type="PANTHER" id="PTHR43427:SF9">
    <property type="entry name" value="ION-TRANSPORT PROTEIN YFEO-RELATED"/>
    <property type="match status" value="1"/>
</dbReference>
<dbReference type="Pfam" id="PF00654">
    <property type="entry name" value="Voltage_CLC"/>
    <property type="match status" value="1"/>
</dbReference>
<dbReference type="PRINTS" id="PR00762">
    <property type="entry name" value="CLCHANNEL"/>
</dbReference>
<dbReference type="SUPFAM" id="SSF81340">
    <property type="entry name" value="Clc chloride channel"/>
    <property type="match status" value="1"/>
</dbReference>
<protein>
    <recommendedName>
        <fullName>Putative ion-transport protein YfeO</fullName>
    </recommendedName>
</protein>
<name>YFEO_SHIFL</name>
<organism>
    <name type="scientific">Shigella flexneri</name>
    <dbReference type="NCBI Taxonomy" id="623"/>
    <lineage>
        <taxon>Bacteria</taxon>
        <taxon>Pseudomonadati</taxon>
        <taxon>Pseudomonadota</taxon>
        <taxon>Gammaproteobacteria</taxon>
        <taxon>Enterobacterales</taxon>
        <taxon>Enterobacteriaceae</taxon>
        <taxon>Shigella</taxon>
    </lineage>
</organism>
<sequence length="418" mass="43650">MLHPRARTMLLLSLPAVAIGIASSLILIVVMKIASVLQNLLWQRLPGTLGIAQDSPLWIIGVLTLTGIAVGLVIRFSQGHAGPDPACEPLIGAPVPPSALPRLIVALILGLAGGVSLGPEHPIMTVNIALAVAIGARLLPRVNRMEWTILASAGTIGALFGTPVAAALIFSQTLNGSSEVPLWDRLFAPLMAAAAGALTTGLFFHPHFSLPIAHYGQMEMTDILSGAIVAAIAIAAGMVAVWCLPRLHAMMNQMKNPVLVLGIGGFILGILGVIGGPVSLFKGLDEMQQMVANQAFSTSDYFLLAVIKLAALVVAAASGFRGGRIFPAVFVGVALGLMLHEHVPAVPAAITVSCAILGIVLVVTRDGWLSLFMAAVVVPNTTLLPLLCIVMLPAWLLLAGKPMMMVNRPKQQPPHDNV</sequence>
<accession>P59585</accession>
<reference key="1">
    <citation type="journal article" date="2002" name="Nucleic Acids Res.">
        <title>Genome sequence of Shigella flexneri 2a: insights into pathogenicity through comparison with genomes of Escherichia coli K12 and O157.</title>
        <authorList>
            <person name="Jin Q."/>
            <person name="Yuan Z."/>
            <person name="Xu J."/>
            <person name="Wang Y."/>
            <person name="Shen Y."/>
            <person name="Lu W."/>
            <person name="Wang J."/>
            <person name="Liu H."/>
            <person name="Yang J."/>
            <person name="Yang F."/>
            <person name="Zhang X."/>
            <person name="Zhang J."/>
            <person name="Yang G."/>
            <person name="Wu H."/>
            <person name="Qu D."/>
            <person name="Dong J."/>
            <person name="Sun L."/>
            <person name="Xue Y."/>
            <person name="Zhao A."/>
            <person name="Gao Y."/>
            <person name="Zhu J."/>
            <person name="Kan B."/>
            <person name="Ding K."/>
            <person name="Chen S."/>
            <person name="Cheng H."/>
            <person name="Yao Z."/>
            <person name="He B."/>
            <person name="Chen R."/>
            <person name="Ma D."/>
            <person name="Qiang B."/>
            <person name="Wen Y."/>
            <person name="Hou Y."/>
            <person name="Yu J."/>
        </authorList>
    </citation>
    <scope>NUCLEOTIDE SEQUENCE [LARGE SCALE GENOMIC DNA]</scope>
    <source>
        <strain>301 / Serotype 2a</strain>
    </source>
</reference>
<reference key="2">
    <citation type="journal article" date="2003" name="Infect. Immun.">
        <title>Complete genome sequence and comparative genomics of Shigella flexneri serotype 2a strain 2457T.</title>
        <authorList>
            <person name="Wei J."/>
            <person name="Goldberg M.B."/>
            <person name="Burland V."/>
            <person name="Venkatesan M.M."/>
            <person name="Deng W."/>
            <person name="Fournier G."/>
            <person name="Mayhew G.F."/>
            <person name="Plunkett G. III"/>
            <person name="Rose D.J."/>
            <person name="Darling A."/>
            <person name="Mau B."/>
            <person name="Perna N.T."/>
            <person name="Payne S.M."/>
            <person name="Runyen-Janecky L.J."/>
            <person name="Zhou S."/>
            <person name="Schwartz D.C."/>
            <person name="Blattner F.R."/>
        </authorList>
    </citation>
    <scope>NUCLEOTIDE SEQUENCE [LARGE SCALE GENOMIC DNA]</scope>
    <source>
        <strain>ATCC 700930 / 2457T / Serotype 2a</strain>
    </source>
</reference>